<accession>Q752V4</accession>
<evidence type="ECO:0000255" key="1">
    <source>
        <dbReference type="PROSITE-ProRule" id="PRU00202"/>
    </source>
</evidence>
<evidence type="ECO:0000256" key="2">
    <source>
        <dbReference type="SAM" id="MobiDB-lite"/>
    </source>
</evidence>
<evidence type="ECO:0000305" key="3"/>
<sequence length="533" mass="59285">MGFKKFFGIRPPEEDTPERNRDLLTEEGIATKNPNSFRKEKFAAYGKFAAANAQDHVYAPAGYEQYARPGAGADKDELESLNRAATDAGDIGNTSRVGQPQQRDPYAVNDNYNPYANGTARDPYATAQPYARQAPVRQAGPRHAAGTPYGSAAVPQGGPGNPYGGSTAGAGTGRNPYQKNMNATVYPPAAGKTANPYASMAQDPYGKGEQRGIAGGPVAMPVPMQPRPQAAAETPRPQAAAEKRAPAVDVDDLNAVIEPTNEDDDLNNSIHEGNEGLNGQGQAPRRGFQTFEELQREQEMKQQMEEDEEVDEIKQQIRFTKQSSVASTRNTLKMAQDAELAGMNSLGMLGHQSEKLNNVERNLNLMKVQNRVAEDKVAELKRLNRNILAVHVGNPFTSKRKVREAEERIKNQRMQDKMQQEETTTQLMSSTNRIENALNDERHSVRERYQRDQALERAKKYQFENDEEDDEMEFEIDRNLDKIGQVSGRLKKLAIAAGQEIDSQQSRIKRIEEDADDMDIRIHLNTSRLTNIR</sequence>
<feature type="chain" id="PRO_0000213607" description="Protein transport protein SEC9">
    <location>
        <begin position="1"/>
        <end position="533"/>
    </location>
</feature>
<feature type="domain" description="t-SNARE coiled-coil homology 1" evidence="1">
    <location>
        <begin position="318"/>
        <end position="380"/>
    </location>
</feature>
<feature type="domain" description="t-SNARE coiled-coil homology 2" evidence="1">
    <location>
        <begin position="470"/>
        <end position="532"/>
    </location>
</feature>
<feature type="region of interest" description="Disordered" evidence="2">
    <location>
        <begin position="1"/>
        <end position="32"/>
    </location>
</feature>
<feature type="region of interest" description="Disordered" evidence="2">
    <location>
        <begin position="68"/>
        <end position="184"/>
    </location>
</feature>
<feature type="region of interest" description="Disordered" evidence="2">
    <location>
        <begin position="200"/>
        <end position="246"/>
    </location>
</feature>
<feature type="region of interest" description="Disordered" evidence="2">
    <location>
        <begin position="259"/>
        <end position="284"/>
    </location>
</feature>
<feature type="compositionally biased region" description="Basic and acidic residues" evidence="2">
    <location>
        <begin position="11"/>
        <end position="24"/>
    </location>
</feature>
<feature type="compositionally biased region" description="Polar residues" evidence="2">
    <location>
        <begin position="92"/>
        <end position="102"/>
    </location>
</feature>
<feature type="compositionally biased region" description="Gly residues" evidence="2">
    <location>
        <begin position="157"/>
        <end position="172"/>
    </location>
</feature>
<feature type="compositionally biased region" description="Low complexity" evidence="2">
    <location>
        <begin position="227"/>
        <end position="240"/>
    </location>
</feature>
<dbReference type="EMBL" id="AE016819">
    <property type="protein sequence ID" value="AAS53840.1"/>
    <property type="molecule type" value="Genomic_DNA"/>
</dbReference>
<dbReference type="RefSeq" id="NP_986016.1">
    <property type="nucleotide sequence ID" value="NM_212152.1"/>
</dbReference>
<dbReference type="SMR" id="Q752V4"/>
<dbReference type="FunCoup" id="Q752V4">
    <property type="interactions" value="90"/>
</dbReference>
<dbReference type="STRING" id="284811.Q752V4"/>
<dbReference type="EnsemblFungi" id="AAS53840">
    <property type="protein sequence ID" value="AAS53840"/>
    <property type="gene ID" value="AGOS_AFR469W"/>
</dbReference>
<dbReference type="GeneID" id="4622293"/>
<dbReference type="KEGG" id="ago:AGOS_AFR469W"/>
<dbReference type="eggNOG" id="KOG3065">
    <property type="taxonomic scope" value="Eukaryota"/>
</dbReference>
<dbReference type="HOGENOM" id="CLU_020823_1_0_1"/>
<dbReference type="InParanoid" id="Q752V4"/>
<dbReference type="OMA" id="LDINVHM"/>
<dbReference type="OrthoDB" id="18679at2759"/>
<dbReference type="Proteomes" id="UP000000591">
    <property type="component" value="Chromosome VI"/>
</dbReference>
<dbReference type="GO" id="GO:0005886">
    <property type="term" value="C:plasma membrane"/>
    <property type="evidence" value="ECO:0000318"/>
    <property type="project" value="GO_Central"/>
</dbReference>
<dbReference type="GO" id="GO:0031201">
    <property type="term" value="C:SNARE complex"/>
    <property type="evidence" value="ECO:0000318"/>
    <property type="project" value="GO_Central"/>
</dbReference>
<dbReference type="GO" id="GO:0005484">
    <property type="term" value="F:SNAP receptor activity"/>
    <property type="evidence" value="ECO:0000318"/>
    <property type="project" value="GO_Central"/>
</dbReference>
<dbReference type="GO" id="GO:0019905">
    <property type="term" value="F:syntaxin binding"/>
    <property type="evidence" value="ECO:0000318"/>
    <property type="project" value="GO_Central"/>
</dbReference>
<dbReference type="GO" id="GO:0006887">
    <property type="term" value="P:exocytosis"/>
    <property type="evidence" value="ECO:0000318"/>
    <property type="project" value="GO_Central"/>
</dbReference>
<dbReference type="GO" id="GO:0015031">
    <property type="term" value="P:protein transport"/>
    <property type="evidence" value="ECO:0007669"/>
    <property type="project" value="UniProtKB-KW"/>
</dbReference>
<dbReference type="GO" id="GO:0035493">
    <property type="term" value="P:SNARE complex assembly"/>
    <property type="evidence" value="ECO:0007669"/>
    <property type="project" value="EnsemblFungi"/>
</dbReference>
<dbReference type="GO" id="GO:0006906">
    <property type="term" value="P:vesicle fusion"/>
    <property type="evidence" value="ECO:0000318"/>
    <property type="project" value="GO_Central"/>
</dbReference>
<dbReference type="CDD" id="cd15857">
    <property type="entry name" value="SNARE_SEC9C"/>
    <property type="match status" value="1"/>
</dbReference>
<dbReference type="CDD" id="cd15886">
    <property type="entry name" value="SNARE_SEC9N"/>
    <property type="match status" value="1"/>
</dbReference>
<dbReference type="FunFam" id="1.20.5.110:FF:000048">
    <property type="entry name" value="Protein transport protein SEC9"/>
    <property type="match status" value="1"/>
</dbReference>
<dbReference type="FunFam" id="1.20.5.110:FF:000043">
    <property type="entry name" value="Protein transport protein sec9"/>
    <property type="match status" value="1"/>
</dbReference>
<dbReference type="Gene3D" id="1.20.5.110">
    <property type="match status" value="2"/>
</dbReference>
<dbReference type="InterPro" id="IPR000727">
    <property type="entry name" value="T_SNARE_dom"/>
</dbReference>
<dbReference type="PANTHER" id="PTHR19305">
    <property type="entry name" value="SYNAPTOSOMAL ASSOCIATED PROTEIN"/>
    <property type="match status" value="1"/>
</dbReference>
<dbReference type="PANTHER" id="PTHR19305:SF9">
    <property type="entry name" value="SYNAPTOSOMAL-ASSOCIATED PROTEIN 29"/>
    <property type="match status" value="1"/>
</dbReference>
<dbReference type="SMART" id="SM00397">
    <property type="entry name" value="t_SNARE"/>
    <property type="match status" value="2"/>
</dbReference>
<dbReference type="SUPFAM" id="SSF58038">
    <property type="entry name" value="SNARE fusion complex"/>
    <property type="match status" value="2"/>
</dbReference>
<dbReference type="PROSITE" id="PS50192">
    <property type="entry name" value="T_SNARE"/>
    <property type="match status" value="1"/>
</dbReference>
<protein>
    <recommendedName>
        <fullName>Protein transport protein SEC9</fullName>
    </recommendedName>
</protein>
<organism>
    <name type="scientific">Eremothecium gossypii (strain ATCC 10895 / CBS 109.51 / FGSC 9923 / NRRL Y-1056)</name>
    <name type="common">Yeast</name>
    <name type="synonym">Ashbya gossypii</name>
    <dbReference type="NCBI Taxonomy" id="284811"/>
    <lineage>
        <taxon>Eukaryota</taxon>
        <taxon>Fungi</taxon>
        <taxon>Dikarya</taxon>
        <taxon>Ascomycota</taxon>
        <taxon>Saccharomycotina</taxon>
        <taxon>Saccharomycetes</taxon>
        <taxon>Saccharomycetales</taxon>
        <taxon>Saccharomycetaceae</taxon>
        <taxon>Eremothecium</taxon>
    </lineage>
</organism>
<keyword id="KW-0175">Coiled coil</keyword>
<keyword id="KW-0653">Protein transport</keyword>
<keyword id="KW-1185">Reference proteome</keyword>
<keyword id="KW-0677">Repeat</keyword>
<keyword id="KW-0813">Transport</keyword>
<proteinExistence type="inferred from homology"/>
<reference key="1">
    <citation type="journal article" date="2004" name="Science">
        <title>The Ashbya gossypii genome as a tool for mapping the ancient Saccharomyces cerevisiae genome.</title>
        <authorList>
            <person name="Dietrich F.S."/>
            <person name="Voegeli S."/>
            <person name="Brachat S."/>
            <person name="Lerch A."/>
            <person name="Gates K."/>
            <person name="Steiner S."/>
            <person name="Mohr C."/>
            <person name="Poehlmann R."/>
            <person name="Luedi P."/>
            <person name="Choi S."/>
            <person name="Wing R.A."/>
            <person name="Flavier A."/>
            <person name="Gaffney T.D."/>
            <person name="Philippsen P."/>
        </authorList>
    </citation>
    <scope>NUCLEOTIDE SEQUENCE [LARGE SCALE GENOMIC DNA]</scope>
    <source>
        <strain>ATCC 10895 / CBS 109.51 / FGSC 9923 / NRRL Y-1056</strain>
    </source>
</reference>
<reference key="2">
    <citation type="journal article" date="2013" name="G3 (Bethesda)">
        <title>Genomes of Ashbya fungi isolated from insects reveal four mating-type loci, numerous translocations, lack of transposons, and distinct gene duplications.</title>
        <authorList>
            <person name="Dietrich F.S."/>
            <person name="Voegeli S."/>
            <person name="Kuo S."/>
            <person name="Philippsen P."/>
        </authorList>
    </citation>
    <scope>GENOME REANNOTATION</scope>
    <source>
        <strain>ATCC 10895 / CBS 109.51 / FGSC 9923 / NRRL Y-1056</strain>
    </source>
</reference>
<name>SEC9_EREGS</name>
<comment type="similarity">
    <text evidence="3">Belongs to the SNAP-25 family.</text>
</comment>
<gene>
    <name type="primary">SEC9</name>
    <name type="ordered locus">AFR469W</name>
</gene>